<reference key="1">
    <citation type="journal article" date="1993" name="Pharm. Res.">
        <title>Molecular cloning of the alcohol/hydroxysteroid form (mSTa1) of sulfotransferase from mouse liver.</title>
        <authorList>
            <person name="Kong A.-N.T."/>
            <person name="Tao D."/>
            <person name="Ma M."/>
            <person name="Yang L."/>
        </authorList>
    </citation>
    <scope>NUCLEOTIDE SEQUENCE [MRNA]</scope>
    <source>
        <strain>BALB/cJ</strain>
        <tissue>Liver</tissue>
    </source>
</reference>
<reference key="2">
    <citation type="journal article" date="2010" name="Cell">
        <title>A tissue-specific atlas of mouse protein phosphorylation and expression.</title>
        <authorList>
            <person name="Huttlin E.L."/>
            <person name="Jedrychowski M.P."/>
            <person name="Elias J.E."/>
            <person name="Goswami T."/>
            <person name="Rad R."/>
            <person name="Beausoleil S.A."/>
            <person name="Villen J."/>
            <person name="Haas W."/>
            <person name="Sowa M.E."/>
            <person name="Gygi S.P."/>
        </authorList>
    </citation>
    <scope>IDENTIFICATION BY MASS SPECTROMETRY [LARGE SCALE ANALYSIS]</scope>
    <source>
        <tissue>Liver</tissue>
    </source>
</reference>
<reference key="3">
    <citation type="journal article" date="2003" name="Endocrinology">
        <title>Conservation of the hydroxysteroid sulfotransferase SULT2B1 gene structure in the mouse: pre- and postnatal expression, kinetic analysis of isoforms, and comparison with prototypical SULT2A1.</title>
        <authorList>
            <person name="Shimizu C."/>
            <person name="Fuda H."/>
            <person name="Yanai H."/>
            <person name="Strott C.A."/>
        </authorList>
    </citation>
    <scope>CATALYTIC ACTIVITY</scope>
    <scope>DEVELOPMENTAL STAGE</scope>
    <scope>TISSUE SPECIFICITY</scope>
    <scope>FUNCTION</scope>
</reference>
<gene>
    <name type="primary">Sult2a1</name>
    <name type="synonym">Sta1</name>
</gene>
<accession>P52843</accession>
<protein>
    <recommendedName>
        <fullName>Sulfotransferase 2A1</fullName>
        <shortName>ST2A1</shortName>
        <ecNumber evidence="3">2.8.2.2</ecNumber>
    </recommendedName>
    <alternativeName>
        <fullName>Bile salt sulfotransferase 1</fullName>
        <ecNumber evidence="2">2.8.2.14</ecNumber>
    </alternativeName>
    <alternativeName>
        <fullName>Hydroxysteroid sulfotransferase</fullName>
        <shortName>ST</shortName>
    </alternativeName>
</protein>
<proteinExistence type="evidence at protein level"/>
<comment type="function">
    <text evidence="1 2 3">Sulfotransferase that utilizes 3'-phospho-5'-adenylyl sulfate (PAPS) as sulfonate donor to catalyze the sulfonation of steroids and bile acids in the liver and adrenal glands (PubMed:12639899). Mediates the sulfation of a wide range of steroids and sterols, including pregnenolone, androsterone, DHEA, bile acids, cholesterol and as well many xenobiotics that contain alcohol and phenol functional groups. Sulfonation increases the water solubility of most compounds, and therefore their renal excretion, but it can also result in bioactivation to form active metabolites. Plays an important role in maintening steroid and lipid homeostasis. Plays a key role in bile acid metabolism (By similarity). In addition, catalyzes the metabolic activation of potent carcinogenic polycyclic arylmethanols (By similarity).</text>
</comment>
<comment type="catalytic activity">
    <reaction evidence="2">
        <text>an alcohol + 3'-phosphoadenylyl sulfate = an alkyl sulfate + adenosine 3',5'-bisphosphate + H(+)</text>
        <dbReference type="Rhea" id="RHEA:22552"/>
        <dbReference type="ChEBI" id="CHEBI:15378"/>
        <dbReference type="ChEBI" id="CHEBI:30879"/>
        <dbReference type="ChEBI" id="CHEBI:58339"/>
        <dbReference type="ChEBI" id="CHEBI:58343"/>
        <dbReference type="ChEBI" id="CHEBI:83414"/>
        <dbReference type="EC" id="2.8.2.2"/>
    </reaction>
    <physiologicalReaction direction="left-to-right" evidence="2">
        <dbReference type="Rhea" id="RHEA:22553"/>
    </physiologicalReaction>
</comment>
<comment type="catalytic activity">
    <reaction evidence="2">
        <text>taurolithocholate + 3'-phosphoadenylyl sulfate = taurolithocholate 3-sulfate + adenosine 3',5'-bisphosphate + H(+)</text>
        <dbReference type="Rhea" id="RHEA:14013"/>
        <dbReference type="ChEBI" id="CHEBI:15378"/>
        <dbReference type="ChEBI" id="CHEBI:17179"/>
        <dbReference type="ChEBI" id="CHEBI:58301"/>
        <dbReference type="ChEBI" id="CHEBI:58339"/>
        <dbReference type="ChEBI" id="CHEBI:58343"/>
        <dbReference type="EC" id="2.8.2.14"/>
    </reaction>
    <physiologicalReaction direction="left-to-right" evidence="2">
        <dbReference type="Rhea" id="RHEA:14014"/>
    </physiologicalReaction>
</comment>
<comment type="catalytic activity">
    <reaction evidence="3">
        <text>pregnenolone + 3'-phosphoadenylyl sulfate = pregnenolone sulfate + adenosine 3',5'-bisphosphate + H(+)</text>
        <dbReference type="Rhea" id="RHEA:52356"/>
        <dbReference type="ChEBI" id="CHEBI:15378"/>
        <dbReference type="ChEBI" id="CHEBI:16581"/>
        <dbReference type="ChEBI" id="CHEBI:58339"/>
        <dbReference type="ChEBI" id="CHEBI:58343"/>
        <dbReference type="ChEBI" id="CHEBI:133000"/>
    </reaction>
    <physiologicalReaction direction="left-to-right" evidence="5">
        <dbReference type="Rhea" id="RHEA:52357"/>
    </physiologicalReaction>
</comment>
<comment type="catalytic activity">
    <reaction evidence="3">
        <text>3beta-hydroxyandrost-5-en-17-one + 3'-phosphoadenylyl sulfate = dehydroepiandrosterone 3-sulfate + adenosine 3',5'-bisphosphate + H(+)</text>
        <dbReference type="Rhea" id="RHEA:51216"/>
        <dbReference type="ChEBI" id="CHEBI:15378"/>
        <dbReference type="ChEBI" id="CHEBI:28689"/>
        <dbReference type="ChEBI" id="CHEBI:57905"/>
        <dbReference type="ChEBI" id="CHEBI:58339"/>
        <dbReference type="ChEBI" id="CHEBI:58343"/>
    </reaction>
    <physiologicalReaction direction="left-to-right" evidence="5">
        <dbReference type="Rhea" id="RHEA:51217"/>
    </physiologicalReaction>
</comment>
<comment type="catalytic activity">
    <reaction evidence="2">
        <text>lithocholate + 3'-phosphoadenylyl sulfate = lithocholate sulfate + adenosine 3',5'-bisphosphate + H(+)</text>
        <dbReference type="Rhea" id="RHEA:51064"/>
        <dbReference type="ChEBI" id="CHEBI:15378"/>
        <dbReference type="ChEBI" id="CHEBI:29744"/>
        <dbReference type="ChEBI" id="CHEBI:58339"/>
        <dbReference type="ChEBI" id="CHEBI:58343"/>
        <dbReference type="ChEBI" id="CHEBI:133940"/>
    </reaction>
    <physiologicalReaction direction="left-to-right" evidence="2">
        <dbReference type="Rhea" id="RHEA:51065"/>
    </physiologicalReaction>
</comment>
<comment type="catalytic activity">
    <reaction evidence="2">
        <text>(24S)-hydroxycholesterol + 3'-phosphoadenylyl sulfate = (24S)-hydroxycholesterol 24-sulfate + adenosine 3',5'-bisphosphate + H(+)</text>
        <dbReference type="Rhea" id="RHEA:52344"/>
        <dbReference type="ChEBI" id="CHEBI:15378"/>
        <dbReference type="ChEBI" id="CHEBI:34310"/>
        <dbReference type="ChEBI" id="CHEBI:58339"/>
        <dbReference type="ChEBI" id="CHEBI:58343"/>
        <dbReference type="ChEBI" id="CHEBI:136566"/>
    </reaction>
    <physiologicalReaction direction="left-to-right" evidence="2">
        <dbReference type="Rhea" id="RHEA:52345"/>
    </physiologicalReaction>
</comment>
<comment type="catalytic activity">
    <reaction evidence="2">
        <text>(24S)-hydroxycholesterol + 3'-phosphoadenylyl sulfate = (24S)-hydroxycholesterol 3-sulfate + adenosine 3',5'-bisphosphate + H(+)</text>
        <dbReference type="Rhea" id="RHEA:52348"/>
        <dbReference type="ChEBI" id="CHEBI:15378"/>
        <dbReference type="ChEBI" id="CHEBI:34310"/>
        <dbReference type="ChEBI" id="CHEBI:58339"/>
        <dbReference type="ChEBI" id="CHEBI:58343"/>
        <dbReference type="ChEBI" id="CHEBI:136567"/>
    </reaction>
    <physiologicalReaction direction="left-to-right" evidence="2">
        <dbReference type="Rhea" id="RHEA:52349"/>
    </physiologicalReaction>
</comment>
<comment type="catalytic activity">
    <reaction evidence="2">
        <text>(24S)-hydroxycholesterol 24-sulfate + 3'-phosphoadenylyl sulfate = (24S)-hydroxycholesterol 3,24-disulfate + adenosine 3',5'-bisphosphate + H(+)</text>
        <dbReference type="Rhea" id="RHEA:52352"/>
        <dbReference type="ChEBI" id="CHEBI:15378"/>
        <dbReference type="ChEBI" id="CHEBI:58339"/>
        <dbReference type="ChEBI" id="CHEBI:58343"/>
        <dbReference type="ChEBI" id="CHEBI:136566"/>
        <dbReference type="ChEBI" id="CHEBI:136568"/>
    </reaction>
    <physiologicalReaction direction="left-to-right" evidence="2">
        <dbReference type="Rhea" id="RHEA:52353"/>
    </physiologicalReaction>
</comment>
<comment type="catalytic activity">
    <reaction evidence="2">
        <text>androsterone + 3'-phosphoadenylyl sulfate = androsterone 3alpha-sulfate + adenosine 3',5'-bisphosphate + H(+)</text>
        <dbReference type="Rhea" id="RHEA:60644"/>
        <dbReference type="ChEBI" id="CHEBI:15378"/>
        <dbReference type="ChEBI" id="CHEBI:16032"/>
        <dbReference type="ChEBI" id="CHEBI:58339"/>
        <dbReference type="ChEBI" id="CHEBI:58343"/>
        <dbReference type="ChEBI" id="CHEBI:133003"/>
    </reaction>
    <physiologicalReaction direction="left-to-right" evidence="2">
        <dbReference type="Rhea" id="RHEA:60645"/>
    </physiologicalReaction>
</comment>
<comment type="subunit">
    <text evidence="2">Homodimer.</text>
</comment>
<comment type="subcellular location">
    <subcellularLocation>
        <location evidence="2">Cytoplasm</location>
    </subcellularLocation>
</comment>
<comment type="tissue specificity">
    <text evidence="3">Highly expressed in liver.</text>
</comment>
<comment type="developmental stage">
    <text evidence="3">Not expressed until 19 dpc.</text>
</comment>
<comment type="similarity">
    <text evidence="4">Belongs to the sulfotransferase 1 family.</text>
</comment>
<name>ST2A1_MOUSE</name>
<sequence length="285" mass="33213">MMSDYNWFEGIPFPAISYQREILEDIRNKFVVKEEDLLILTYPKSGTNWLIEIVCLIQTKGDPKWIQTVPIWNRSPWIETDIGYSALINKEGPRLITSHLPIHLFSKSFFSSKAKAIYLVRNPRDILVSGYFFWGNTNLVKNPGSLGTYFEWFLKGNVLFGSWFEHVRGWLSMREWDNFLVLYYEDIKKDTKGTIKKICDFLGKNLGPDELDLVLKYSSFQAMKENNMSNFSLIKEDQVTNGLKLMRKGTIGDWKNHFTVAQAEAFDKVFQEKMAGFPPGIFPWE</sequence>
<feature type="chain" id="PRO_0000085147" description="Sulfotransferase 2A1">
    <location>
        <begin position="1"/>
        <end position="285"/>
    </location>
</feature>
<feature type="active site" description="Proton acceptor" evidence="2">
    <location>
        <position position="99"/>
    </location>
</feature>
<feature type="binding site" evidence="2">
    <location>
        <position position="44"/>
    </location>
    <ligand>
        <name>3'-phosphoadenylyl sulfate</name>
        <dbReference type="ChEBI" id="CHEBI:58339"/>
    </ligand>
</feature>
<feature type="binding site" evidence="2">
    <location>
        <position position="45"/>
    </location>
    <ligand>
        <name>3'-phosphoadenylyl sulfate</name>
        <dbReference type="ChEBI" id="CHEBI:58339"/>
    </ligand>
</feature>
<feature type="binding site" evidence="2">
    <location>
        <position position="46"/>
    </location>
    <ligand>
        <name>3'-phosphoadenylyl sulfate</name>
        <dbReference type="ChEBI" id="CHEBI:58339"/>
    </ligand>
</feature>
<feature type="binding site" evidence="2">
    <location>
        <position position="47"/>
    </location>
    <ligand>
        <name>3'-phosphoadenylyl sulfate</name>
        <dbReference type="ChEBI" id="CHEBI:58339"/>
    </ligand>
</feature>
<feature type="binding site" evidence="2">
    <location>
        <position position="48"/>
    </location>
    <ligand>
        <name>3'-phosphoadenylyl sulfate</name>
        <dbReference type="ChEBI" id="CHEBI:58339"/>
    </ligand>
</feature>
<feature type="binding site" evidence="2">
    <location>
        <position position="49"/>
    </location>
    <ligand>
        <name>3'-phosphoadenylyl sulfate</name>
        <dbReference type="ChEBI" id="CHEBI:58339"/>
    </ligand>
</feature>
<feature type="binding site" evidence="2">
    <location>
        <position position="121"/>
    </location>
    <ligand>
        <name>3'-phosphoadenylyl sulfate</name>
        <dbReference type="ChEBI" id="CHEBI:58339"/>
    </ligand>
</feature>
<feature type="binding site" evidence="2">
    <location>
        <position position="129"/>
    </location>
    <ligand>
        <name>3'-phosphoadenylyl sulfate</name>
        <dbReference type="ChEBI" id="CHEBI:58339"/>
    </ligand>
</feature>
<feature type="binding site" evidence="2">
    <location>
        <position position="184"/>
    </location>
    <ligand>
        <name>3'-phosphoadenylyl sulfate</name>
        <dbReference type="ChEBI" id="CHEBI:58339"/>
    </ligand>
</feature>
<feature type="binding site" evidence="2">
    <location>
        <position position="218"/>
    </location>
    <ligand>
        <name>3'-phosphoadenylyl sulfate</name>
        <dbReference type="ChEBI" id="CHEBI:58339"/>
    </ligand>
</feature>
<feature type="binding site" evidence="2">
    <location>
        <position position="223"/>
    </location>
    <ligand>
        <name>3'-phosphoadenylyl sulfate</name>
        <dbReference type="ChEBI" id="CHEBI:58339"/>
    </ligand>
</feature>
<feature type="binding site" evidence="2">
    <location>
        <position position="247"/>
    </location>
    <ligand>
        <name>3'-phosphoadenylyl sulfate</name>
        <dbReference type="ChEBI" id="CHEBI:58339"/>
    </ligand>
</feature>
<feature type="binding site" evidence="2">
    <location>
        <position position="248"/>
    </location>
    <ligand>
        <name>3'-phosphoadenylyl sulfate</name>
        <dbReference type="ChEBI" id="CHEBI:58339"/>
    </ligand>
</feature>
<feature type="binding site" evidence="2">
    <location>
        <position position="249"/>
    </location>
    <ligand>
        <name>3'-phosphoadenylyl sulfate</name>
        <dbReference type="ChEBI" id="CHEBI:58339"/>
    </ligand>
</feature>
<evidence type="ECO:0000250" key="1">
    <source>
        <dbReference type="UniProtKB" id="P15709"/>
    </source>
</evidence>
<evidence type="ECO:0000250" key="2">
    <source>
        <dbReference type="UniProtKB" id="Q06520"/>
    </source>
</evidence>
<evidence type="ECO:0000269" key="3">
    <source>
    </source>
</evidence>
<evidence type="ECO:0000305" key="4"/>
<evidence type="ECO:0000305" key="5">
    <source>
    </source>
</evidence>
<organism>
    <name type="scientific">Mus musculus</name>
    <name type="common">Mouse</name>
    <dbReference type="NCBI Taxonomy" id="10090"/>
    <lineage>
        <taxon>Eukaryota</taxon>
        <taxon>Metazoa</taxon>
        <taxon>Chordata</taxon>
        <taxon>Craniata</taxon>
        <taxon>Vertebrata</taxon>
        <taxon>Euteleostomi</taxon>
        <taxon>Mammalia</taxon>
        <taxon>Eutheria</taxon>
        <taxon>Euarchontoglires</taxon>
        <taxon>Glires</taxon>
        <taxon>Rodentia</taxon>
        <taxon>Myomorpha</taxon>
        <taxon>Muroidea</taxon>
        <taxon>Muridae</taxon>
        <taxon>Murinae</taxon>
        <taxon>Mus</taxon>
        <taxon>Mus</taxon>
    </lineage>
</organism>
<keyword id="KW-0963">Cytoplasm</keyword>
<keyword id="KW-0443">Lipid metabolism</keyword>
<keyword id="KW-1185">Reference proteome</keyword>
<keyword id="KW-0753">Steroid metabolism</keyword>
<keyword id="KW-0808">Transferase</keyword>
<dbReference type="EC" id="2.8.2.2" evidence="3"/>
<dbReference type="EC" id="2.8.2.14" evidence="2"/>
<dbReference type="EMBL" id="L02335">
    <property type="status" value="NOT_ANNOTATED_CDS"/>
    <property type="molecule type" value="mRNA"/>
</dbReference>
<dbReference type="CCDS" id="CCDS52031.1"/>
<dbReference type="RefSeq" id="NP_001104766.1">
    <property type="nucleotide sequence ID" value="NM_001111296.2"/>
</dbReference>
<dbReference type="SMR" id="P52843"/>
<dbReference type="FunCoup" id="P52843">
    <property type="interactions" value="373"/>
</dbReference>
<dbReference type="STRING" id="10090.ENSMUSP00000104162"/>
<dbReference type="GlyGen" id="P52843">
    <property type="glycosylation" value="1 site, 1 O-linked glycan (1 site)"/>
</dbReference>
<dbReference type="iPTMnet" id="P52843"/>
<dbReference type="PhosphoSitePlus" id="P52843"/>
<dbReference type="jPOST" id="P52843"/>
<dbReference type="PaxDb" id="10090-ENSMUSP00000104162"/>
<dbReference type="ProteomicsDB" id="258632"/>
<dbReference type="Ensembl" id="ENSMUST00000108522.5">
    <property type="protein sequence ID" value="ENSMUSP00000104162.4"/>
    <property type="gene ID" value="ENSMUSG00000078798.5"/>
</dbReference>
<dbReference type="GeneID" id="20859"/>
<dbReference type="KEGG" id="mmu:20859"/>
<dbReference type="UCSC" id="uc009ffz.2">
    <property type="organism name" value="mouse"/>
</dbReference>
<dbReference type="AGR" id="MGI:98430"/>
<dbReference type="CTD" id="6822"/>
<dbReference type="MGI" id="MGI:98430">
    <property type="gene designation" value="Sult2a1"/>
</dbReference>
<dbReference type="VEuPathDB" id="HostDB:ENSMUSG00000078798"/>
<dbReference type="eggNOG" id="KOG1584">
    <property type="taxonomic scope" value="Eukaryota"/>
</dbReference>
<dbReference type="GeneTree" id="ENSGT00940000154432"/>
<dbReference type="HOGENOM" id="CLU_027239_1_0_1"/>
<dbReference type="InParanoid" id="P52843"/>
<dbReference type="OMA" id="CQGLSAY"/>
<dbReference type="OrthoDB" id="205623at2759"/>
<dbReference type="PhylomeDB" id="P52843"/>
<dbReference type="TreeFam" id="TF321745"/>
<dbReference type="Reactome" id="R-MMU-156584">
    <property type="pathway name" value="Cytosolic sulfonation of small molecules"/>
</dbReference>
<dbReference type="Reactome" id="R-MMU-9753281">
    <property type="pathway name" value="Paracetamol ADME"/>
</dbReference>
<dbReference type="SABIO-RK" id="P52843"/>
<dbReference type="BioGRID-ORCS" id="20859">
    <property type="hits" value="3 hits in 45 CRISPR screens"/>
</dbReference>
<dbReference type="PRO" id="PR:P52843"/>
<dbReference type="Proteomes" id="UP000000589">
    <property type="component" value="Chromosome 7"/>
</dbReference>
<dbReference type="RNAct" id="P52843">
    <property type="molecule type" value="protein"/>
</dbReference>
<dbReference type="Bgee" id="ENSMUSG00000078798">
    <property type="expression patterns" value="Expressed in primary palate and 24 other cell types or tissues"/>
</dbReference>
<dbReference type="GO" id="GO:0005737">
    <property type="term" value="C:cytoplasm"/>
    <property type="evidence" value="ECO:0007669"/>
    <property type="project" value="UniProtKB-SubCell"/>
</dbReference>
<dbReference type="GO" id="GO:0050656">
    <property type="term" value="F:3'-phosphoadenosine 5'-phosphosulfate binding"/>
    <property type="evidence" value="ECO:0000250"/>
    <property type="project" value="UniProtKB"/>
</dbReference>
<dbReference type="GO" id="GO:0004027">
    <property type="term" value="F:alcohol sulfotransferase activity"/>
    <property type="evidence" value="ECO:0000314"/>
    <property type="project" value="UniProtKB"/>
</dbReference>
<dbReference type="GO" id="GO:0047704">
    <property type="term" value="F:bile-salt sulfotransferase activity"/>
    <property type="evidence" value="ECO:0000250"/>
    <property type="project" value="UniProtKB"/>
</dbReference>
<dbReference type="GO" id="GO:0050294">
    <property type="term" value="F:steroid sulfotransferase activity"/>
    <property type="evidence" value="ECO:0000314"/>
    <property type="project" value="UniProtKB"/>
</dbReference>
<dbReference type="GO" id="GO:0008146">
    <property type="term" value="F:sulfotransferase activity"/>
    <property type="evidence" value="ECO:0000314"/>
    <property type="project" value="UniProtKB"/>
</dbReference>
<dbReference type="GO" id="GO:0008203">
    <property type="term" value="P:cholesterol metabolic process"/>
    <property type="evidence" value="ECO:0000250"/>
    <property type="project" value="UniProtKB"/>
</dbReference>
<dbReference type="GO" id="GO:0008202">
    <property type="term" value="P:steroid metabolic process"/>
    <property type="evidence" value="ECO:0000314"/>
    <property type="project" value="UniProtKB"/>
</dbReference>
<dbReference type="GO" id="GO:0051923">
    <property type="term" value="P:sulfation"/>
    <property type="evidence" value="ECO:0000314"/>
    <property type="project" value="MGI"/>
</dbReference>
<dbReference type="FunFam" id="3.40.50.300:FF:000433">
    <property type="entry name" value="Estrogen sulfotransferase"/>
    <property type="match status" value="1"/>
</dbReference>
<dbReference type="Gene3D" id="3.40.50.300">
    <property type="entry name" value="P-loop containing nucleotide triphosphate hydrolases"/>
    <property type="match status" value="1"/>
</dbReference>
<dbReference type="InterPro" id="IPR027417">
    <property type="entry name" value="P-loop_NTPase"/>
</dbReference>
<dbReference type="InterPro" id="IPR000863">
    <property type="entry name" value="Sulfotransferase_dom"/>
</dbReference>
<dbReference type="PANTHER" id="PTHR11783">
    <property type="entry name" value="SULFOTRANSFERASE SULT"/>
    <property type="match status" value="1"/>
</dbReference>
<dbReference type="Pfam" id="PF00685">
    <property type="entry name" value="Sulfotransfer_1"/>
    <property type="match status" value="1"/>
</dbReference>
<dbReference type="SUPFAM" id="SSF52540">
    <property type="entry name" value="P-loop containing nucleoside triphosphate hydrolases"/>
    <property type="match status" value="1"/>
</dbReference>